<organism>
    <name type="scientific">Vibrio cholerae serotype O1 (strain ATCC 39541 / Classical Ogawa 395 / O395)</name>
    <dbReference type="NCBI Taxonomy" id="345073"/>
    <lineage>
        <taxon>Bacteria</taxon>
        <taxon>Pseudomonadati</taxon>
        <taxon>Pseudomonadota</taxon>
        <taxon>Gammaproteobacteria</taxon>
        <taxon>Vibrionales</taxon>
        <taxon>Vibrionaceae</taxon>
        <taxon>Vibrio</taxon>
    </lineage>
</organism>
<comment type="function">
    <text>Transcription activation of the irgA gene. In the presence of sufficient iron, transcription of both irgA and irgB is negatively regulated by a fur-like protein. In low iron conditions, negative regulation of transcription is removed, and production of IrgB leads to positive transcriptional activation of irgA.</text>
</comment>
<comment type="similarity">
    <text evidence="2">Belongs to the LysR transcriptional regulatory family.</text>
</comment>
<name>IRGB_VIBC3</name>
<feature type="chain" id="PRO_0000321854" description="Iron-regulated virulence regulatory protein IrgB">
    <location>
        <begin position="1"/>
        <end position="298"/>
    </location>
</feature>
<feature type="domain" description="HTH lysR-type" evidence="1">
    <location>
        <begin position="1"/>
        <end position="59"/>
    </location>
</feature>
<feature type="DNA-binding region" description="H-T-H motif" evidence="1">
    <location>
        <begin position="19"/>
        <end position="38"/>
    </location>
</feature>
<reference key="1">
    <citation type="journal article" date="1991" name="Proc. Natl. Acad. Sci. U.S.A.">
        <title>Positive transcriptional regulation of an iron-regulated virulence gene in Vibrio cholerae.</title>
        <authorList>
            <person name="Goldberg M.B."/>
            <person name="Boyko S.A."/>
            <person name="Calderwood S.B."/>
        </authorList>
    </citation>
    <scope>NUCLEOTIDE SEQUENCE [GENOMIC DNA]</scope>
</reference>
<reference key="2">
    <citation type="submission" date="2007-03" db="EMBL/GenBank/DDBJ databases">
        <authorList>
            <person name="Heidelberg J."/>
        </authorList>
    </citation>
    <scope>NUCLEOTIDE SEQUENCE [LARGE SCALE GENOMIC DNA]</scope>
    <source>
        <strain>ATCC 39541 / Classical Ogawa 395 / O395</strain>
    </source>
</reference>
<reference key="3">
    <citation type="journal article" date="2008" name="PLoS ONE">
        <title>A recalibrated molecular clock and independent origins for the cholera pandemic clones.</title>
        <authorList>
            <person name="Feng L."/>
            <person name="Reeves P.R."/>
            <person name="Lan R."/>
            <person name="Ren Y."/>
            <person name="Gao C."/>
            <person name="Zhou Z."/>
            <person name="Ren Y."/>
            <person name="Cheng J."/>
            <person name="Wang W."/>
            <person name="Wang J."/>
            <person name="Qian W."/>
            <person name="Li D."/>
            <person name="Wang L."/>
        </authorList>
    </citation>
    <scope>NUCLEOTIDE SEQUENCE [LARGE SCALE GENOMIC DNA]</scope>
    <source>
        <strain>ATCC 39541 / Classical Ogawa 395 / O395</strain>
    </source>
</reference>
<protein>
    <recommendedName>
        <fullName>Iron-regulated virulence regulatory protein IrgB</fullName>
    </recommendedName>
</protein>
<evidence type="ECO:0000255" key="1">
    <source>
        <dbReference type="PROSITE-ProRule" id="PRU00253"/>
    </source>
</evidence>
<evidence type="ECO:0000305" key="2"/>
<gene>
    <name type="primary">irgB</name>
    <name type="ordered locus">VC0395_A0027</name>
    <name type="ordered locus">VC395_0518</name>
</gene>
<sequence length="298" mass="34099">MQDLSAVKAFHALCQHKSLTAAAKALEQPKSTLSRRLAQLEEDLGQSLLMRQGNRLTLTKAGEVFAVYSEQLLELANKSQEALQELNNQVTGELTLVVHPNLIRGWLSQVLDEFMQQHSTLKIRLLSQFQHSDEVFEPDLIIWIEHAAPMGYRKERLGYWRYATYASPKYLAHRDKPTHPRELIHHPWIDFIACRRAELELHHPEFGSYSLPALESRLQSDNLAMQADAIAKGRGIGLLPTWFANGFETAHPGSLIPCVNGWQSQPTEINCFYPLGRHPLRLRLFIDALRQARPDEWQ</sequence>
<keyword id="KW-0010">Activator</keyword>
<keyword id="KW-0238">DNA-binding</keyword>
<keyword id="KW-0804">Transcription</keyword>
<keyword id="KW-0805">Transcription regulation</keyword>
<keyword id="KW-0843">Virulence</keyword>
<dbReference type="EMBL" id="U72152">
    <property type="protein sequence ID" value="AAC44765.1"/>
    <property type="molecule type" value="Genomic_DNA"/>
</dbReference>
<dbReference type="EMBL" id="CP000627">
    <property type="protein sequence ID" value="ABQ21369.1"/>
    <property type="molecule type" value="Genomic_DNA"/>
</dbReference>
<dbReference type="EMBL" id="CP001235">
    <property type="protein sequence ID" value="ACP08537.1"/>
    <property type="molecule type" value="Genomic_DNA"/>
</dbReference>
<dbReference type="PIR" id="A38579">
    <property type="entry name" value="A38579"/>
</dbReference>
<dbReference type="RefSeq" id="WP_001153532.1">
    <property type="nucleotide sequence ID" value="NZ_JAACZH010000029.1"/>
</dbReference>
<dbReference type="SMR" id="A5F9F9"/>
<dbReference type="KEGG" id="vco:VC0395_A0027"/>
<dbReference type="KEGG" id="vcr:VC395_0518"/>
<dbReference type="PATRIC" id="fig|345073.21.peg.506"/>
<dbReference type="eggNOG" id="COG0583">
    <property type="taxonomic scope" value="Bacteria"/>
</dbReference>
<dbReference type="HOGENOM" id="CLU_039613_16_2_6"/>
<dbReference type="OrthoDB" id="6183733at2"/>
<dbReference type="Proteomes" id="UP000000249">
    <property type="component" value="Chromosome 2"/>
</dbReference>
<dbReference type="GO" id="GO:0003700">
    <property type="term" value="F:DNA-binding transcription factor activity"/>
    <property type="evidence" value="ECO:0007669"/>
    <property type="project" value="InterPro"/>
</dbReference>
<dbReference type="GO" id="GO:0043565">
    <property type="term" value="F:sequence-specific DNA binding"/>
    <property type="evidence" value="ECO:0007669"/>
    <property type="project" value="TreeGrafter"/>
</dbReference>
<dbReference type="GO" id="GO:0006351">
    <property type="term" value="P:DNA-templated transcription"/>
    <property type="evidence" value="ECO:0007669"/>
    <property type="project" value="TreeGrafter"/>
</dbReference>
<dbReference type="Gene3D" id="3.40.190.290">
    <property type="match status" value="1"/>
</dbReference>
<dbReference type="Gene3D" id="1.10.10.10">
    <property type="entry name" value="Winged helix-like DNA-binding domain superfamily/Winged helix DNA-binding domain"/>
    <property type="match status" value="1"/>
</dbReference>
<dbReference type="InterPro" id="IPR005119">
    <property type="entry name" value="LysR_subst-bd"/>
</dbReference>
<dbReference type="InterPro" id="IPR000847">
    <property type="entry name" value="Tscrpt_reg_HTH_LysR"/>
</dbReference>
<dbReference type="InterPro" id="IPR036388">
    <property type="entry name" value="WH-like_DNA-bd_sf"/>
</dbReference>
<dbReference type="InterPro" id="IPR036390">
    <property type="entry name" value="WH_DNA-bd_sf"/>
</dbReference>
<dbReference type="PANTHER" id="PTHR30537">
    <property type="entry name" value="HTH-TYPE TRANSCRIPTIONAL REGULATOR"/>
    <property type="match status" value="1"/>
</dbReference>
<dbReference type="PANTHER" id="PTHR30537:SF66">
    <property type="entry name" value="IRON-REGULATED VIRULENCE REGULATORY PROTEIN IRGB"/>
    <property type="match status" value="1"/>
</dbReference>
<dbReference type="Pfam" id="PF00126">
    <property type="entry name" value="HTH_1"/>
    <property type="match status" value="1"/>
</dbReference>
<dbReference type="Pfam" id="PF03466">
    <property type="entry name" value="LysR_substrate"/>
    <property type="match status" value="1"/>
</dbReference>
<dbReference type="SUPFAM" id="SSF53850">
    <property type="entry name" value="Periplasmic binding protein-like II"/>
    <property type="match status" value="1"/>
</dbReference>
<dbReference type="SUPFAM" id="SSF46785">
    <property type="entry name" value="Winged helix' DNA-binding domain"/>
    <property type="match status" value="1"/>
</dbReference>
<dbReference type="PROSITE" id="PS50931">
    <property type="entry name" value="HTH_LYSR"/>
    <property type="match status" value="1"/>
</dbReference>
<accession>A5F9F9</accession>
<accession>C3LX27</accession>
<accession>P25543</accession>
<accession>Q9KUP1</accession>
<proteinExistence type="inferred from homology"/>